<organism>
    <name type="scientific">Neurospora crassa (strain ATCC 24698 / 74-OR23-1A / CBS 708.71 / DSM 1257 / FGSC 987)</name>
    <dbReference type="NCBI Taxonomy" id="367110"/>
    <lineage>
        <taxon>Eukaryota</taxon>
        <taxon>Fungi</taxon>
        <taxon>Dikarya</taxon>
        <taxon>Ascomycota</taxon>
        <taxon>Pezizomycotina</taxon>
        <taxon>Sordariomycetes</taxon>
        <taxon>Sordariomycetidae</taxon>
        <taxon>Sordariales</taxon>
        <taxon>Sordariaceae</taxon>
        <taxon>Neurospora</taxon>
    </lineage>
</organism>
<proteinExistence type="evidence at protein level"/>
<sequence length="320" mass="35737">MPPRLPGPQGLRSLTLCLRPAVASPAQALQPLIQTANISQKEKKRKMKQDPYGWAQAQQRKAVNVKRQAELQAQRDAAWGDPVKGITTPFVESFDSAGQASVSPPKVGPDGQLVEEPKPLPTSPHLRNYLLNKDEFDSAIQYAEHILKPIKAEDRLTADPEKEDEEAREHAARHAKAVAALERIAKLEHGGAKDRKHANIRRCIETFGRHITDQSLERPTPPLARGVEPKPQPVRAGPDTGSSEVQIAILTSKIRALSKALEGHGGNRDKNNKRSLRRLCHKRQRLLRYMERKERGSGRWHHMLETLGLTPATWKGQITL</sequence>
<dbReference type="EMBL" id="CM002237">
    <property type="protein sequence ID" value="EAA27605.1"/>
    <property type="molecule type" value="Genomic_DNA"/>
</dbReference>
<dbReference type="RefSeq" id="XP_956841.1">
    <property type="nucleotide sequence ID" value="XM_951748.2"/>
</dbReference>
<dbReference type="PDB" id="6YW5">
    <property type="method" value="EM"/>
    <property type="resolution" value="2.85 A"/>
    <property type="chains" value="OO=1-320"/>
</dbReference>
<dbReference type="PDB" id="6YWX">
    <property type="method" value="EM"/>
    <property type="resolution" value="3.10 A"/>
    <property type="chains" value="OO=1-320"/>
</dbReference>
<dbReference type="PDBsum" id="6YW5"/>
<dbReference type="PDBsum" id="6YWX"/>
<dbReference type="EMDB" id="EMD-10958"/>
<dbReference type="EMDB" id="EMD-10978"/>
<dbReference type="SMR" id="Q1K5G1"/>
<dbReference type="FunCoup" id="Q1K5G1">
    <property type="interactions" value="225"/>
</dbReference>
<dbReference type="STRING" id="367110.Q1K5G1"/>
<dbReference type="PaxDb" id="5141-EFNCRP00000002509"/>
<dbReference type="EnsemblFungi" id="EAA27605">
    <property type="protein sequence ID" value="EAA27605"/>
    <property type="gene ID" value="NCU03394"/>
</dbReference>
<dbReference type="GeneID" id="3872988"/>
<dbReference type="KEGG" id="ncr:NCU03394"/>
<dbReference type="VEuPathDB" id="FungiDB:NCU03394"/>
<dbReference type="HOGENOM" id="CLU_078264_0_0_1"/>
<dbReference type="InParanoid" id="Q1K5G1"/>
<dbReference type="OMA" id="HLQEHRN"/>
<dbReference type="OrthoDB" id="441444at2759"/>
<dbReference type="Proteomes" id="UP000001805">
    <property type="component" value="Chromosome 6, Linkage Group II"/>
</dbReference>
<dbReference type="GO" id="GO:0005739">
    <property type="term" value="C:mitochondrion"/>
    <property type="evidence" value="ECO:0007669"/>
    <property type="project" value="UniProtKB-SubCell"/>
</dbReference>
<dbReference type="GO" id="GO:1990904">
    <property type="term" value="C:ribonucleoprotein complex"/>
    <property type="evidence" value="ECO:0007669"/>
    <property type="project" value="UniProtKB-KW"/>
</dbReference>
<dbReference type="GO" id="GO:0005840">
    <property type="term" value="C:ribosome"/>
    <property type="evidence" value="ECO:0007669"/>
    <property type="project" value="UniProtKB-KW"/>
</dbReference>
<dbReference type="GO" id="GO:0003735">
    <property type="term" value="F:structural constituent of ribosome"/>
    <property type="evidence" value="ECO:0007669"/>
    <property type="project" value="InterPro"/>
</dbReference>
<dbReference type="GO" id="GO:0006412">
    <property type="term" value="P:translation"/>
    <property type="evidence" value="ECO:0007669"/>
    <property type="project" value="InterPro"/>
</dbReference>
<dbReference type="CDD" id="cd00353">
    <property type="entry name" value="Ribosomal_S15p_S13e"/>
    <property type="match status" value="1"/>
</dbReference>
<dbReference type="Gene3D" id="1.10.287.10">
    <property type="entry name" value="S15/NS1, RNA-binding"/>
    <property type="match status" value="1"/>
</dbReference>
<dbReference type="InterPro" id="IPR000589">
    <property type="entry name" value="Ribosomal_uS15"/>
</dbReference>
<dbReference type="InterPro" id="IPR005290">
    <property type="entry name" value="Ribosomal_uS15_bac-type"/>
</dbReference>
<dbReference type="InterPro" id="IPR009068">
    <property type="entry name" value="uS15_NS1_RNA-bd_sf"/>
</dbReference>
<dbReference type="PANTHER" id="PTHR23321">
    <property type="entry name" value="RIBOSOMAL PROTEIN S15, BACTERIAL AND ORGANELLAR"/>
    <property type="match status" value="1"/>
</dbReference>
<dbReference type="PANTHER" id="PTHR23321:SF26">
    <property type="entry name" value="SMALL RIBOSOMAL SUBUNIT PROTEIN US15M"/>
    <property type="match status" value="1"/>
</dbReference>
<dbReference type="Pfam" id="PF00312">
    <property type="entry name" value="Ribosomal_S15"/>
    <property type="match status" value="1"/>
</dbReference>
<dbReference type="SMART" id="SM01387">
    <property type="entry name" value="Ribosomal_S15"/>
    <property type="match status" value="1"/>
</dbReference>
<dbReference type="SUPFAM" id="SSF47060">
    <property type="entry name" value="S15/NS1 RNA-binding domain"/>
    <property type="match status" value="1"/>
</dbReference>
<feature type="chain" id="PRO_0000458578" description="Small ribosomal subunit protein uS15m">
    <location>
        <begin position="1"/>
        <end position="320"/>
    </location>
</feature>
<feature type="region of interest" description="Disordered" evidence="1">
    <location>
        <begin position="37"/>
        <end position="60"/>
    </location>
</feature>
<feature type="region of interest" description="Disordered" evidence="1">
    <location>
        <begin position="214"/>
        <end position="242"/>
    </location>
</feature>
<comment type="function">
    <text evidence="5">Component of the mitochondrial ribosome (mitoribosome), a dedicated translation machinery responsible for the synthesis of mitochondrial genome-encoded proteins, including at least some of the essential transmembrane subunits of the mitochondrial respiratory chain. The mitoribosomes are attached to the mitochondrial inner membrane and translation products are cotranslationally integrated into the membrane.</text>
</comment>
<comment type="subunit">
    <text evidence="2">Component of the mitochondrial small ribosomal subunit (mt-SSU). Mature N.crassa 74S mitochondrial ribosomes consist of a small (37S) and a large (54S) subunit. The 37S small subunit contains a 16S ribosomal RNA (16S mt-rRNA) and 32 different proteins. The 54S large subunit contains a 23S rRNA (23S mt-rRNA) and 42 different proteins.</text>
</comment>
<comment type="subcellular location">
    <subcellularLocation>
        <location evidence="2">Mitochondrion</location>
    </subcellularLocation>
</comment>
<comment type="similarity">
    <text evidence="4">Belongs to the universal ribosomal protein uS15 family.</text>
</comment>
<name>RT28_NEUCR</name>
<reference key="1">
    <citation type="journal article" date="2003" name="Nature">
        <title>The genome sequence of the filamentous fungus Neurospora crassa.</title>
        <authorList>
            <person name="Galagan J.E."/>
            <person name="Calvo S.E."/>
            <person name="Borkovich K.A."/>
            <person name="Selker E.U."/>
            <person name="Read N.D."/>
            <person name="Jaffe D.B."/>
            <person name="FitzHugh W."/>
            <person name="Ma L.-J."/>
            <person name="Smirnov S."/>
            <person name="Purcell S."/>
            <person name="Rehman B."/>
            <person name="Elkins T."/>
            <person name="Engels R."/>
            <person name="Wang S."/>
            <person name="Nielsen C.B."/>
            <person name="Butler J."/>
            <person name="Endrizzi M."/>
            <person name="Qui D."/>
            <person name="Ianakiev P."/>
            <person name="Bell-Pedersen D."/>
            <person name="Nelson M.A."/>
            <person name="Werner-Washburne M."/>
            <person name="Selitrennikoff C.P."/>
            <person name="Kinsey J.A."/>
            <person name="Braun E.L."/>
            <person name="Zelter A."/>
            <person name="Schulte U."/>
            <person name="Kothe G.O."/>
            <person name="Jedd G."/>
            <person name="Mewes H.-W."/>
            <person name="Staben C."/>
            <person name="Marcotte E."/>
            <person name="Greenberg D."/>
            <person name="Roy A."/>
            <person name="Foley K."/>
            <person name="Naylor J."/>
            <person name="Stange-Thomann N."/>
            <person name="Barrett R."/>
            <person name="Gnerre S."/>
            <person name="Kamal M."/>
            <person name="Kamvysselis M."/>
            <person name="Mauceli E.W."/>
            <person name="Bielke C."/>
            <person name="Rudd S."/>
            <person name="Frishman D."/>
            <person name="Krystofova S."/>
            <person name="Rasmussen C."/>
            <person name="Metzenberg R.L."/>
            <person name="Perkins D.D."/>
            <person name="Kroken S."/>
            <person name="Cogoni C."/>
            <person name="Macino G."/>
            <person name="Catcheside D.E.A."/>
            <person name="Li W."/>
            <person name="Pratt R.J."/>
            <person name="Osmani S.A."/>
            <person name="DeSouza C.P.C."/>
            <person name="Glass N.L."/>
            <person name="Orbach M.J."/>
            <person name="Berglund J.A."/>
            <person name="Voelker R."/>
            <person name="Yarden O."/>
            <person name="Plamann M."/>
            <person name="Seiler S."/>
            <person name="Dunlap J.C."/>
            <person name="Radford A."/>
            <person name="Aramayo R."/>
            <person name="Natvig D.O."/>
            <person name="Alex L.A."/>
            <person name="Mannhaupt G."/>
            <person name="Ebbole D.J."/>
            <person name="Freitag M."/>
            <person name="Paulsen I."/>
            <person name="Sachs M.S."/>
            <person name="Lander E.S."/>
            <person name="Nusbaum C."/>
            <person name="Birren B.W."/>
        </authorList>
    </citation>
    <scope>NUCLEOTIDE SEQUENCE [LARGE SCALE GENOMIC DNA]</scope>
    <source>
        <strain>ATCC 24698 / 74-OR23-1A / CBS 708.71 / DSM 1257 / FGSC 987</strain>
    </source>
</reference>
<reference evidence="6 7" key="2">
    <citation type="journal article" date="2020" name="Nat. Commun.">
        <title>Analysis of translating mitoribosome reveals functional characteristics of translation in mitochondria of fungi.</title>
        <authorList>
            <person name="Itoh Y."/>
            <person name="Naschberger A."/>
            <person name="Mortezaei N."/>
            <person name="Herrmann J.M."/>
            <person name="Amunts A."/>
        </authorList>
    </citation>
    <scope>STRUCTURE BY ELECTRON MICROSCOPY (2.85 ANGSTROMS)</scope>
</reference>
<gene>
    <name type="primary">mrps28</name>
    <name type="ORF">NCU03394</name>
</gene>
<accession>Q1K5G1</accession>
<keyword id="KW-0002">3D-structure</keyword>
<keyword id="KW-0496">Mitochondrion</keyword>
<keyword id="KW-1185">Reference proteome</keyword>
<keyword id="KW-0687">Ribonucleoprotein</keyword>
<keyword id="KW-0689">Ribosomal protein</keyword>
<evidence type="ECO:0000256" key="1">
    <source>
        <dbReference type="SAM" id="MobiDB-lite"/>
    </source>
</evidence>
<evidence type="ECO:0000269" key="2">
    <source>
    </source>
</evidence>
<evidence type="ECO:0000303" key="3">
    <source>
    </source>
</evidence>
<evidence type="ECO:0000305" key="4"/>
<evidence type="ECO:0000305" key="5">
    <source>
    </source>
</evidence>
<evidence type="ECO:0007744" key="6">
    <source>
        <dbReference type="PDB" id="6YW5"/>
    </source>
</evidence>
<evidence type="ECO:0007744" key="7">
    <source>
        <dbReference type="PDB" id="6YWX"/>
    </source>
</evidence>
<protein>
    <recommendedName>
        <fullName evidence="3">Small ribosomal subunit protein uS15m</fullName>
    </recommendedName>
</protein>